<reference key="1">
    <citation type="journal article" date="1997" name="J. Bacteriol.">
        <title>Complete genome sequence of Methanobacterium thermoautotrophicum deltaH: functional analysis and comparative genomics.</title>
        <authorList>
            <person name="Smith D.R."/>
            <person name="Doucette-Stamm L.A."/>
            <person name="Deloughery C."/>
            <person name="Lee H.-M."/>
            <person name="Dubois J."/>
            <person name="Aldredge T."/>
            <person name="Bashirzadeh R."/>
            <person name="Blakely D."/>
            <person name="Cook R."/>
            <person name="Gilbert K."/>
            <person name="Harrison D."/>
            <person name="Hoang L."/>
            <person name="Keagle P."/>
            <person name="Lumm W."/>
            <person name="Pothier B."/>
            <person name="Qiu D."/>
            <person name="Spadafora R."/>
            <person name="Vicare R."/>
            <person name="Wang Y."/>
            <person name="Wierzbowski J."/>
            <person name="Gibson R."/>
            <person name="Jiwani N."/>
            <person name="Caruso A."/>
            <person name="Bush D."/>
            <person name="Safer H."/>
            <person name="Patwell D."/>
            <person name="Prabhakar S."/>
            <person name="McDougall S."/>
            <person name="Shimer G."/>
            <person name="Goyal A."/>
            <person name="Pietrovski S."/>
            <person name="Church G.M."/>
            <person name="Daniels C.J."/>
            <person name="Mao J.-I."/>
            <person name="Rice P."/>
            <person name="Noelling J."/>
            <person name="Reeve J.N."/>
        </authorList>
    </citation>
    <scope>NUCLEOTIDE SEQUENCE [LARGE SCALE GENOMIC DNA]</scope>
    <source>
        <strain>ATCC 29096 / DSM 1053 / JCM 10044 / NBRC 100330 / Delta H</strain>
    </source>
</reference>
<organism>
    <name type="scientific">Methanothermobacter thermautotrophicus (strain ATCC 29096 / DSM 1053 / JCM 10044 / NBRC 100330 / Delta H)</name>
    <name type="common">Methanobacterium thermoautotrophicum</name>
    <dbReference type="NCBI Taxonomy" id="187420"/>
    <lineage>
        <taxon>Archaea</taxon>
        <taxon>Methanobacteriati</taxon>
        <taxon>Methanobacteriota</taxon>
        <taxon>Methanomada group</taxon>
        <taxon>Methanobacteria</taxon>
        <taxon>Methanobacteriales</taxon>
        <taxon>Methanobacteriaceae</taxon>
        <taxon>Methanothermobacter</taxon>
    </lineage>
</organism>
<gene>
    <name type="ordered locus">MTH_1109</name>
</gene>
<proteinExistence type="inferred from homology"/>
<name>Y1109_METTH</name>
<protein>
    <recommendedName>
        <fullName evidence="1">Putative nickel insertion protein</fullName>
    </recommendedName>
</protein>
<evidence type="ECO:0000255" key="1">
    <source>
        <dbReference type="HAMAP-Rule" id="MF_01074"/>
    </source>
</evidence>
<evidence type="ECO:0000305" key="2"/>
<dbReference type="EMBL" id="AE000666">
    <property type="protein sequence ID" value="AAB85598.1"/>
    <property type="status" value="ALT_INIT"/>
    <property type="molecule type" value="Genomic_DNA"/>
</dbReference>
<dbReference type="PIR" id="E69014">
    <property type="entry name" value="E69014"/>
</dbReference>
<dbReference type="SMR" id="O27181"/>
<dbReference type="STRING" id="187420.MTH_1109"/>
<dbReference type="PaxDb" id="187420-MTH_1109"/>
<dbReference type="EnsemblBacteria" id="AAB85598">
    <property type="protein sequence ID" value="AAB85598"/>
    <property type="gene ID" value="MTH_1109"/>
</dbReference>
<dbReference type="KEGG" id="mth:MTH_1109"/>
<dbReference type="PATRIC" id="fig|187420.15.peg.1085"/>
<dbReference type="HOGENOM" id="CLU_028523_2_1_2"/>
<dbReference type="InParanoid" id="O27181"/>
<dbReference type="Proteomes" id="UP000005223">
    <property type="component" value="Chromosome"/>
</dbReference>
<dbReference type="GO" id="GO:0016829">
    <property type="term" value="F:lyase activity"/>
    <property type="evidence" value="ECO:0007669"/>
    <property type="project" value="UniProtKB-UniRule"/>
</dbReference>
<dbReference type="GO" id="GO:0016151">
    <property type="term" value="F:nickel cation binding"/>
    <property type="evidence" value="ECO:0007669"/>
    <property type="project" value="UniProtKB-UniRule"/>
</dbReference>
<dbReference type="Gene3D" id="3.10.20.300">
    <property type="entry name" value="mk0293 like domain"/>
    <property type="match status" value="1"/>
</dbReference>
<dbReference type="Gene3D" id="3.30.70.1380">
    <property type="entry name" value="Transcriptional regulatory protein pf0864 domain like"/>
    <property type="match status" value="1"/>
</dbReference>
<dbReference type="HAMAP" id="MF_01074">
    <property type="entry name" value="LarC"/>
    <property type="match status" value="1"/>
</dbReference>
<dbReference type="InterPro" id="IPR002822">
    <property type="entry name" value="Ni_insertion"/>
</dbReference>
<dbReference type="NCBIfam" id="TIGR00299">
    <property type="entry name" value="nickel pincer cofactor biosynthesis protein LarC"/>
    <property type="match status" value="1"/>
</dbReference>
<dbReference type="PANTHER" id="PTHR36566">
    <property type="entry name" value="NICKEL INSERTION PROTEIN-RELATED"/>
    <property type="match status" value="1"/>
</dbReference>
<dbReference type="PANTHER" id="PTHR36566:SF1">
    <property type="entry name" value="PYRIDINIUM-3,5-BISTHIOCARBOXYLIC ACID MONONUCLEOTIDE NICKEL INSERTION PROTEIN"/>
    <property type="match status" value="1"/>
</dbReference>
<dbReference type="Pfam" id="PF01969">
    <property type="entry name" value="Ni_insertion"/>
    <property type="match status" value="1"/>
</dbReference>
<sequence length="411" mass="44730">MVTVIDPQLAGVSGNMMVGALIDLGAHPERTAEVMEDAASHFGGADVSVSEVKRAGLRATYVDVRADESLSVGYLEFLRLLEGISHPALDDEMLSMARAVFHTIAQAEASVHGVKLDEVHFHEVGAADAVADVMGAVFAYFDLNLHRDEVYTLPVAVGGGLVRGAHGLTPVPAPATTEILRGFPVTGGPSGVELATPTGSALLVNMVREHRRFFPPMEIQATGYGAGSMDPEFPNILRIVRGSGQVPHDTVTLLETNVDHLSGEVLGNIFERLLEAGALDVTLTPVIMKKNRPGQLIRVICRENEYERILEHLFSETGTLGVRIFPQVHRGVLERRIMEAEVDIKGRRTARFKVGLMGSRVVNARIEYEDARRISLETGIPLRDVIEMSEKQFRDLKFKADQENDGSGGLK</sequence>
<feature type="chain" id="PRO_0000146863" description="Putative nickel insertion protein">
    <location>
        <begin position="1"/>
        <end position="411"/>
    </location>
</feature>
<accession>O27181</accession>
<comment type="similarity">
    <text evidence="1">Belongs to the LarC family.</text>
</comment>
<comment type="sequence caution" evidence="2">
    <conflict type="erroneous initiation">
        <sequence resource="EMBL-CDS" id="AAB85598"/>
    </conflict>
</comment>
<keyword id="KW-0533">Nickel</keyword>
<keyword id="KW-1185">Reference proteome</keyword>